<dbReference type="EMBL" id="EQ966329">
    <property type="protein sequence ID" value="EED80885.1"/>
    <property type="molecule type" value="Genomic_DNA"/>
</dbReference>
<dbReference type="RefSeq" id="XP_002473925.1">
    <property type="nucleotide sequence ID" value="XM_002473880.1"/>
</dbReference>
<dbReference type="SMR" id="B8PE34"/>
<dbReference type="FunCoup" id="B8PE34">
    <property type="interactions" value="86"/>
</dbReference>
<dbReference type="STRING" id="561896.B8PE34"/>
<dbReference type="KEGG" id="ppl:POSPLDRAFT_106662"/>
<dbReference type="HOGENOM" id="CLU_047155_4_1_1"/>
<dbReference type="InParanoid" id="B8PE34"/>
<dbReference type="OrthoDB" id="277235at2759"/>
<dbReference type="GO" id="GO:0005739">
    <property type="term" value="C:mitochondrion"/>
    <property type="evidence" value="ECO:0007669"/>
    <property type="project" value="UniProtKB-SubCell"/>
</dbReference>
<dbReference type="GO" id="GO:0003746">
    <property type="term" value="F:translation elongation factor activity"/>
    <property type="evidence" value="ECO:0007669"/>
    <property type="project" value="UniProtKB-UniRule"/>
</dbReference>
<dbReference type="GO" id="GO:0070125">
    <property type="term" value="P:mitochondrial translational elongation"/>
    <property type="evidence" value="ECO:0007669"/>
    <property type="project" value="TreeGrafter"/>
</dbReference>
<dbReference type="Gene3D" id="3.30.479.20">
    <property type="entry name" value="Elongation factor Ts, dimerisation domain"/>
    <property type="match status" value="2"/>
</dbReference>
<dbReference type="HAMAP" id="MF_00050">
    <property type="entry name" value="EF_Ts"/>
    <property type="match status" value="1"/>
</dbReference>
<dbReference type="InterPro" id="IPR036402">
    <property type="entry name" value="EF-Ts_dimer_sf"/>
</dbReference>
<dbReference type="InterPro" id="IPR001816">
    <property type="entry name" value="Transl_elong_EFTs/EF1B"/>
</dbReference>
<dbReference type="InterPro" id="IPR014039">
    <property type="entry name" value="Transl_elong_EFTs/EF1B_dimer"/>
</dbReference>
<dbReference type="InterPro" id="IPR018101">
    <property type="entry name" value="Transl_elong_Ts_CS"/>
</dbReference>
<dbReference type="PANTHER" id="PTHR11741">
    <property type="entry name" value="ELONGATION FACTOR TS"/>
    <property type="match status" value="1"/>
</dbReference>
<dbReference type="PANTHER" id="PTHR11741:SF0">
    <property type="entry name" value="ELONGATION FACTOR TS, MITOCHONDRIAL"/>
    <property type="match status" value="1"/>
</dbReference>
<dbReference type="Pfam" id="PF00889">
    <property type="entry name" value="EF_TS"/>
    <property type="match status" value="1"/>
</dbReference>
<dbReference type="SUPFAM" id="SSF54713">
    <property type="entry name" value="Elongation factor Ts (EF-Ts), dimerisation domain"/>
    <property type="match status" value="1"/>
</dbReference>
<dbReference type="PROSITE" id="PS01127">
    <property type="entry name" value="EF_TS_2"/>
    <property type="match status" value="1"/>
</dbReference>
<sequence>MDVSKALLWLEKQQTESAVKKAAKVADRTANEGLIGTTVLSSGVANGRRVGVRAAMVELNCETDFVARNELFANLLEDITHTAAFISEPANAETFMQPFSMETLQNAPLLSQTKPSQNGKATVSEAMRDLTGRVGEKISLRRALTVVRDPFTSSQPDLALRVAARVHQSVFNPTQGRIGSLALLALKSKRLSEVIASQTFQDDLDKLCQALGRQVIGFPTTCIRSPSGTTDEGALYDQPFSMFIGPGNDQSVGAFLQSWAQERSLVNEDEEQSAGVEVLEFAKWSVGEVV</sequence>
<feature type="chain" id="PRO_0000402347" description="Elongation factor Ts, mitochondrial 1">
    <location>
        <begin position="1"/>
        <end position="290"/>
    </location>
</feature>
<accession>B8PE34</accession>
<gene>
    <name evidence="1" type="primary">TSF1-1</name>
    <name type="ORF">POSPLDRAFT_106662</name>
</gene>
<evidence type="ECO:0000255" key="1">
    <source>
        <dbReference type="HAMAP-Rule" id="MF_03135"/>
    </source>
</evidence>
<comment type="function">
    <text evidence="1">Associates with the EF-Tu.GDP complex and induces the exchange of GDP to GTP. It remains bound to the aminoacyl-tRNA.EF-Tu.GTP complex up to the GTP hydrolysis stage on the ribosome.</text>
</comment>
<comment type="subcellular location">
    <subcellularLocation>
        <location evidence="1">Mitochondrion</location>
    </subcellularLocation>
</comment>
<comment type="miscellaneous">
    <text evidence="1">This protein may be expected to contain an N-terminal transit peptide but none has been predicted.</text>
</comment>
<comment type="similarity">
    <text evidence="1">Belongs to the EF-Ts family.</text>
</comment>
<keyword id="KW-0251">Elongation factor</keyword>
<keyword id="KW-0496">Mitochondrion</keyword>
<keyword id="KW-0648">Protein biosynthesis</keyword>
<protein>
    <recommendedName>
        <fullName evidence="1">Elongation factor Ts, mitochondrial 1</fullName>
        <shortName evidence="1">EF-Ts 1</shortName>
        <shortName evidence="1">EF-TsMt 1</shortName>
    </recommendedName>
</protein>
<name>EFTS1_POSPM</name>
<reference key="1">
    <citation type="journal article" date="2009" name="Proc. Natl. Acad. Sci. U.S.A.">
        <title>Genome, transcriptome, and secretome analysis of wood decay fungus Postia placenta supports unique mechanisms of lignocellulose conversion.</title>
        <authorList>
            <person name="Martinez D."/>
            <person name="Challacombe J."/>
            <person name="Morgenstern I."/>
            <person name="Hibbett D."/>
            <person name="Schmoll M."/>
            <person name="Kubicek C.P."/>
            <person name="Ferreira P."/>
            <person name="Ruiz-Duenas F.J."/>
            <person name="Martinez A.T."/>
            <person name="Kersten P."/>
            <person name="Hammel K.E."/>
            <person name="Vanden Wymelenberg A."/>
            <person name="Gaskell J."/>
            <person name="Lindquist E."/>
            <person name="Sabat G."/>
            <person name="Splinter BonDurant S."/>
            <person name="Larrondo L.F."/>
            <person name="Canessa P."/>
            <person name="Vicuna R."/>
            <person name="Yadav J."/>
            <person name="Doddapaneni H."/>
            <person name="Subramanian V."/>
            <person name="Pisabarro A.G."/>
            <person name="Lavin J.L."/>
            <person name="Oguiza J.A."/>
            <person name="Master E."/>
            <person name="Henrissat B."/>
            <person name="Coutinho P.M."/>
            <person name="Harris P."/>
            <person name="Magnuson J.K."/>
            <person name="Baker S.E."/>
            <person name="Bruno K."/>
            <person name="Kenealy W."/>
            <person name="Hoegger P.J."/>
            <person name="Kuees U."/>
            <person name="Ramaiya P."/>
            <person name="Lucas S."/>
            <person name="Salamov A."/>
            <person name="Shapiro H."/>
            <person name="Tu H."/>
            <person name="Chee C.L."/>
            <person name="Misra M."/>
            <person name="Xie G."/>
            <person name="Teter S."/>
            <person name="Yaver D."/>
            <person name="James T."/>
            <person name="Mokrejs M."/>
            <person name="Pospisek M."/>
            <person name="Grigoriev I.V."/>
            <person name="Brettin T."/>
            <person name="Rokhsar D."/>
            <person name="Berka R."/>
            <person name="Cullen D."/>
        </authorList>
    </citation>
    <scope>NUCLEOTIDE SEQUENCE [LARGE SCALE GENOMIC DNA]</scope>
    <source>
        <strain>ATCC 44394 / Madison 698-R</strain>
    </source>
</reference>
<organism>
    <name type="scientific">Postia placenta (strain ATCC 44394 / Madison 698-R)</name>
    <name type="common">Brown rot fungus</name>
    <name type="synonym">Poria monticola</name>
    <dbReference type="NCBI Taxonomy" id="561896"/>
    <lineage>
        <taxon>Eukaryota</taxon>
        <taxon>Fungi</taxon>
        <taxon>Dikarya</taxon>
        <taxon>Basidiomycota</taxon>
        <taxon>Agaricomycotina</taxon>
        <taxon>Agaricomycetes</taxon>
        <taxon>Polyporales</taxon>
        <taxon>Adustoporiaceae</taxon>
        <taxon>Rhodonia</taxon>
    </lineage>
</organism>
<proteinExistence type="inferred from homology"/>